<gene>
    <name type="primary">SERF1</name>
</gene>
<protein>
    <recommendedName>
        <fullName>Small EDRK-rich factor 1</fullName>
    </recommendedName>
</protein>
<evidence type="ECO:0000250" key="1">
    <source>
        <dbReference type="UniProtKB" id="O75920"/>
    </source>
</evidence>
<evidence type="ECO:0000250" key="2">
    <source>
        <dbReference type="UniProtKB" id="Q9BKU8"/>
    </source>
</evidence>
<evidence type="ECO:0000256" key="3">
    <source>
        <dbReference type="SAM" id="MobiDB-lite"/>
    </source>
</evidence>
<evidence type="ECO:0000305" key="4"/>
<reference key="1">
    <citation type="submission" date="2005-10" db="EMBL/GenBank/DDBJ databases">
        <authorList>
            <consortium name="NIH - Mammalian Gene Collection (MGC) project"/>
        </authorList>
    </citation>
    <scope>NUCLEOTIDE SEQUENCE [LARGE SCALE MRNA]</scope>
    <source>
        <strain>Crossbred X Angus</strain>
        <tissue>Liver</tissue>
    </source>
</reference>
<proteinExistence type="inferred from homology"/>
<keyword id="KW-0963">Cytoplasm</keyword>
<keyword id="KW-0539">Nucleus</keyword>
<keyword id="KW-1185">Reference proteome</keyword>
<organism>
    <name type="scientific">Bos taurus</name>
    <name type="common">Bovine</name>
    <dbReference type="NCBI Taxonomy" id="9913"/>
    <lineage>
        <taxon>Eukaryota</taxon>
        <taxon>Metazoa</taxon>
        <taxon>Chordata</taxon>
        <taxon>Craniata</taxon>
        <taxon>Vertebrata</taxon>
        <taxon>Euteleostomi</taxon>
        <taxon>Mammalia</taxon>
        <taxon>Eutheria</taxon>
        <taxon>Laurasiatheria</taxon>
        <taxon>Artiodactyla</taxon>
        <taxon>Ruminantia</taxon>
        <taxon>Pecora</taxon>
        <taxon>Bovidae</taxon>
        <taxon>Bovinae</taxon>
        <taxon>Bos</taxon>
    </lineage>
</organism>
<accession>Q32P76</accession>
<dbReference type="EMBL" id="BC108230">
    <property type="protein sequence ID" value="AAI08231.1"/>
    <property type="molecule type" value="mRNA"/>
</dbReference>
<dbReference type="RefSeq" id="NP_001106772.1">
    <property type="nucleotide sequence ID" value="NM_001113301.1"/>
</dbReference>
<dbReference type="FunCoup" id="Q32P76">
    <property type="interactions" value="208"/>
</dbReference>
<dbReference type="STRING" id="9913.ENSBTAP00000045674"/>
<dbReference type="PaxDb" id="9913-ENSBTAP00000045674"/>
<dbReference type="GeneID" id="526395"/>
<dbReference type="KEGG" id="bta:526395"/>
<dbReference type="CTD" id="728492"/>
<dbReference type="eggNOG" id="KOG4488">
    <property type="taxonomic scope" value="Eukaryota"/>
</dbReference>
<dbReference type="HOGENOM" id="CLU_165034_1_1_1"/>
<dbReference type="InParanoid" id="Q32P76"/>
<dbReference type="OrthoDB" id="18018at2759"/>
<dbReference type="TreeFam" id="TF330718"/>
<dbReference type="Proteomes" id="UP000009136">
    <property type="component" value="Unplaced"/>
</dbReference>
<dbReference type="GO" id="GO:0005829">
    <property type="term" value="C:cytosol"/>
    <property type="evidence" value="ECO:0007669"/>
    <property type="project" value="UniProtKB-SubCell"/>
</dbReference>
<dbReference type="GO" id="GO:0005634">
    <property type="term" value="C:nucleus"/>
    <property type="evidence" value="ECO:0007669"/>
    <property type="project" value="UniProtKB-SubCell"/>
</dbReference>
<dbReference type="InterPro" id="IPR007513">
    <property type="entry name" value="SERF-like_N"/>
</dbReference>
<dbReference type="InterPro" id="IPR040211">
    <property type="entry name" value="SERF1/2-like"/>
</dbReference>
<dbReference type="PANTHER" id="PTHR13596">
    <property type="entry name" value="SMALL EDRK-RICH FACTOR 1"/>
    <property type="match status" value="1"/>
</dbReference>
<dbReference type="PANTHER" id="PTHR13596:SF1">
    <property type="entry name" value="SMALL EDRK-RICH FACTOR 1"/>
    <property type="match status" value="1"/>
</dbReference>
<dbReference type="Pfam" id="PF04419">
    <property type="entry name" value="SERF-like_N"/>
    <property type="match status" value="1"/>
</dbReference>
<comment type="function">
    <text evidence="1">Positive regulator of amyloid protein aggregation and proteotoxicity (By similarity). Induces conformational changes in amyloid proteins, such as APP, HTT, and SNCA, driving them into compact formations preceding the formation of aggregates (By similarity).</text>
</comment>
<comment type="subunit">
    <text evidence="1">Interacts with SNCA; this interaction promotes the aggregation of SNCA.</text>
</comment>
<comment type="subcellular location">
    <subcellularLocation>
        <location evidence="2">Cytoplasm</location>
        <location evidence="2">Cytosol</location>
    </subcellularLocation>
    <subcellularLocation>
        <location evidence="2">Nucleus</location>
    </subcellularLocation>
</comment>
<comment type="similarity">
    <text evidence="4">Belongs to the SERF family.</text>
</comment>
<sequence>MARGNQRELARQKNMKKSQEISKGKRKEDSLTTSQRKQRDSEIMQQKQKAANERKSMQTREK</sequence>
<feature type="chain" id="PRO_0000268194" description="Small EDRK-rich factor 1">
    <location>
        <begin position="1"/>
        <end position="62"/>
    </location>
</feature>
<feature type="region of interest" description="Disordered" evidence="3">
    <location>
        <begin position="1"/>
        <end position="62"/>
    </location>
</feature>
<feature type="compositionally biased region" description="Basic and acidic residues" evidence="3">
    <location>
        <begin position="1"/>
        <end position="30"/>
    </location>
</feature>
<feature type="compositionally biased region" description="Basic and acidic residues" evidence="3">
    <location>
        <begin position="50"/>
        <end position="62"/>
    </location>
</feature>
<name>SERF1_BOVIN</name>